<sequence>MVVTAAGSAEEAVRRWVDAAGGRLVLDGGLATELEANGADLNDPLWSAKCLLSSPHLIRKVHMDYLEAGANIIITASYQATIQGFESKGFSKEQSENLLTKSVEIALEAREMFLKEHLEKSTPIQHPVLVAASLGSYGAYLADGSEYSGDYGEAGTKEFLKDFHRRRLQVLAEAGPDLIAFETIPNKLEAEAYVELLEECNINIPAWFSFNSKDGVHIVSGDSLIECTTIADKCAKVGAVGINCTPPRFIHGLILSIRKVTDKPILIYPNSGERYDGEKKEWVESTGVSDGDFVSYVNEWCKDGAVLIGGCCRTTPNTIRAIHRTLNKSPNKQQLPAVE</sequence>
<keyword id="KW-0028">Amino-acid biosynthesis</keyword>
<keyword id="KW-0479">Metal-binding</keyword>
<keyword id="KW-0486">Methionine biosynthesis</keyword>
<keyword id="KW-0489">Methyltransferase</keyword>
<keyword id="KW-1185">Reference proteome</keyword>
<keyword id="KW-0949">S-adenosyl-L-methionine</keyword>
<keyword id="KW-0808">Transferase</keyword>
<keyword id="KW-0862">Zinc</keyword>
<protein>
    <recommendedName>
        <fullName>Homocysteine S-methyltransferase 2</fullName>
        <ecNumber>2.1.1.10</ecNumber>
    </recommendedName>
    <alternativeName>
        <fullName>S-methylmethionine:homocysteine methyltransferase 2</fullName>
        <shortName>SMM:Hcy S-methyltransferase 2</shortName>
    </alternativeName>
    <alternativeName>
        <fullName>ZmHMT-2</fullName>
    </alternativeName>
</protein>
<gene>
    <name type="primary">HMT-2</name>
</gene>
<reference key="1">
    <citation type="journal article" date="2001" name="Plant J.">
        <title>The S-methylmethionine cycle in angiosperms: ubiquity, antiquity and activity.</title>
        <authorList>
            <person name="Ranocha P."/>
            <person name="McNeil S.D."/>
            <person name="Ziemak M.J."/>
            <person name="Li C."/>
            <person name="Tarczynski M.C."/>
            <person name="Hanson A.D."/>
        </authorList>
    </citation>
    <scope>NUCLEOTIDE SEQUENCE [MRNA]</scope>
</reference>
<accession>Q9FUM9</accession>
<evidence type="ECO:0000250" key="1"/>
<evidence type="ECO:0000255" key="2">
    <source>
        <dbReference type="PROSITE-ProRule" id="PRU00333"/>
    </source>
</evidence>
<name>HMT2_MAIZE</name>
<dbReference type="EC" id="2.1.1.10"/>
<dbReference type="EMBL" id="AF297045">
    <property type="protein sequence ID" value="AAG22538.1"/>
    <property type="molecule type" value="mRNA"/>
</dbReference>
<dbReference type="RefSeq" id="NP_001105012.1">
    <property type="nucleotide sequence ID" value="NM_001111542.2"/>
</dbReference>
<dbReference type="SMR" id="Q9FUM9"/>
<dbReference type="FunCoup" id="Q9FUM9">
    <property type="interactions" value="228"/>
</dbReference>
<dbReference type="STRING" id="4577.Q9FUM9"/>
<dbReference type="PaxDb" id="4577-GRMZM2G117240_P01"/>
<dbReference type="EnsemblPlants" id="Zm00001eb031360_T001">
    <property type="protein sequence ID" value="Zm00001eb031360_P001"/>
    <property type="gene ID" value="Zm00001eb031360"/>
</dbReference>
<dbReference type="GeneID" id="541874"/>
<dbReference type="Gramene" id="Zm00001eb031360_T001">
    <property type="protein sequence ID" value="Zm00001eb031360_P001"/>
    <property type="gene ID" value="Zm00001eb031360"/>
</dbReference>
<dbReference type="KEGG" id="zma:541874"/>
<dbReference type="eggNOG" id="KOG1579">
    <property type="taxonomic scope" value="Eukaryota"/>
</dbReference>
<dbReference type="HOGENOM" id="CLU_004914_3_2_1"/>
<dbReference type="InParanoid" id="Q9FUM9"/>
<dbReference type="OMA" id="CCKIFAE"/>
<dbReference type="OrthoDB" id="261426at2759"/>
<dbReference type="Proteomes" id="UP000007305">
    <property type="component" value="Chromosome 1"/>
</dbReference>
<dbReference type="ExpressionAtlas" id="Q9FUM9">
    <property type="expression patterns" value="baseline and differential"/>
</dbReference>
<dbReference type="GO" id="GO:0061627">
    <property type="term" value="F:S-methylmethionine-homocysteine S-methyltransferase activity"/>
    <property type="evidence" value="ECO:0007669"/>
    <property type="project" value="RHEA"/>
</dbReference>
<dbReference type="GO" id="GO:0008270">
    <property type="term" value="F:zinc ion binding"/>
    <property type="evidence" value="ECO:0007669"/>
    <property type="project" value="InterPro"/>
</dbReference>
<dbReference type="GO" id="GO:0009086">
    <property type="term" value="P:methionine biosynthetic process"/>
    <property type="evidence" value="ECO:0007669"/>
    <property type="project" value="UniProtKB-KW"/>
</dbReference>
<dbReference type="GO" id="GO:0032259">
    <property type="term" value="P:methylation"/>
    <property type="evidence" value="ECO:0007669"/>
    <property type="project" value="UniProtKB-KW"/>
</dbReference>
<dbReference type="FunFam" id="3.20.20.330:FF:000002">
    <property type="entry name" value="Homocysteine S-methyltransferase"/>
    <property type="match status" value="1"/>
</dbReference>
<dbReference type="Gene3D" id="3.20.20.330">
    <property type="entry name" value="Homocysteine-binding-like domain"/>
    <property type="match status" value="1"/>
</dbReference>
<dbReference type="InterPro" id="IPR017226">
    <property type="entry name" value="Betaine-hCys_S-MeTrfase_BHMT"/>
</dbReference>
<dbReference type="InterPro" id="IPR003726">
    <property type="entry name" value="HCY_dom"/>
</dbReference>
<dbReference type="InterPro" id="IPR036589">
    <property type="entry name" value="HCY_dom_sf"/>
</dbReference>
<dbReference type="InterPro" id="IPR051486">
    <property type="entry name" value="Hcy_S-methyltransferase"/>
</dbReference>
<dbReference type="NCBIfam" id="NF007020">
    <property type="entry name" value="PRK09485.1"/>
    <property type="match status" value="1"/>
</dbReference>
<dbReference type="PANTHER" id="PTHR46015:SF11">
    <property type="entry name" value="HOMOCYSTEINE S-METHYLTRANSFERASE 3"/>
    <property type="match status" value="1"/>
</dbReference>
<dbReference type="PANTHER" id="PTHR46015">
    <property type="entry name" value="ZGC:172121"/>
    <property type="match status" value="1"/>
</dbReference>
<dbReference type="Pfam" id="PF02574">
    <property type="entry name" value="S-methyl_trans"/>
    <property type="match status" value="1"/>
</dbReference>
<dbReference type="PIRSF" id="PIRSF037505">
    <property type="entry name" value="Betaine_HMT"/>
    <property type="match status" value="1"/>
</dbReference>
<dbReference type="SUPFAM" id="SSF82282">
    <property type="entry name" value="Homocysteine S-methyltransferase"/>
    <property type="match status" value="1"/>
</dbReference>
<dbReference type="PROSITE" id="PS50970">
    <property type="entry name" value="HCY"/>
    <property type="match status" value="1"/>
</dbReference>
<feature type="chain" id="PRO_0000114615" description="Homocysteine S-methyltransferase 2">
    <location>
        <begin position="1"/>
        <end position="339"/>
    </location>
</feature>
<feature type="domain" description="Hcy-binding" evidence="2">
    <location>
        <begin position="12"/>
        <end position="326"/>
    </location>
</feature>
<feature type="binding site" evidence="2">
    <location>
        <position position="244"/>
    </location>
    <ligand>
        <name>Zn(2+)</name>
        <dbReference type="ChEBI" id="CHEBI:29105"/>
    </ligand>
</feature>
<feature type="binding site" evidence="2">
    <location>
        <position position="311"/>
    </location>
    <ligand>
        <name>Zn(2+)</name>
        <dbReference type="ChEBI" id="CHEBI:29105"/>
    </ligand>
</feature>
<feature type="binding site" evidence="2">
    <location>
        <position position="312"/>
    </location>
    <ligand>
        <name>Zn(2+)</name>
        <dbReference type="ChEBI" id="CHEBI:29105"/>
    </ligand>
</feature>
<proteinExistence type="evidence at transcript level"/>
<organism>
    <name type="scientific">Zea mays</name>
    <name type="common">Maize</name>
    <dbReference type="NCBI Taxonomy" id="4577"/>
    <lineage>
        <taxon>Eukaryota</taxon>
        <taxon>Viridiplantae</taxon>
        <taxon>Streptophyta</taxon>
        <taxon>Embryophyta</taxon>
        <taxon>Tracheophyta</taxon>
        <taxon>Spermatophyta</taxon>
        <taxon>Magnoliopsida</taxon>
        <taxon>Liliopsida</taxon>
        <taxon>Poales</taxon>
        <taxon>Poaceae</taxon>
        <taxon>PACMAD clade</taxon>
        <taxon>Panicoideae</taxon>
        <taxon>Andropogonodae</taxon>
        <taxon>Andropogoneae</taxon>
        <taxon>Tripsacinae</taxon>
        <taxon>Zea</taxon>
    </lineage>
</organism>
<comment type="function">
    <text evidence="1">Catalyzes methyl transfer from S-methylmethionine (SMM) to adenosyl-L-homocysteine (AdoMet). SMM degradation (by HMT-1, HMT-2, HMT-3 and HMT-4) and biosynthesis (by MMT1) constitute the SMM cycle in plants, which is probably required to achieve short term control of AdoMet level (By similarity).</text>
</comment>
<comment type="catalytic activity">
    <reaction>
        <text>S-methyl-L-methionine + L-homocysteine = 2 L-methionine + H(+)</text>
        <dbReference type="Rhea" id="RHEA:26337"/>
        <dbReference type="ChEBI" id="CHEBI:15378"/>
        <dbReference type="ChEBI" id="CHEBI:57844"/>
        <dbReference type="ChEBI" id="CHEBI:58199"/>
        <dbReference type="ChEBI" id="CHEBI:58252"/>
        <dbReference type="EC" id="2.1.1.10"/>
    </reaction>
</comment>
<comment type="cofactor">
    <cofactor evidence="2">
        <name>Zn(2+)</name>
        <dbReference type="ChEBI" id="CHEBI:29105"/>
    </cofactor>
</comment>
<comment type="subunit">
    <text evidence="1">Monomer.</text>
</comment>